<name>GLGA_PROMA</name>
<organism>
    <name type="scientific">Prochlorococcus marinus (strain SARG / CCMP1375 / SS120)</name>
    <dbReference type="NCBI Taxonomy" id="167539"/>
    <lineage>
        <taxon>Bacteria</taxon>
        <taxon>Bacillati</taxon>
        <taxon>Cyanobacteriota</taxon>
        <taxon>Cyanophyceae</taxon>
        <taxon>Synechococcales</taxon>
        <taxon>Prochlorococcaceae</taxon>
        <taxon>Prochlorococcus</taxon>
    </lineage>
</organism>
<gene>
    <name evidence="1" type="primary">glgA</name>
    <name type="ordered locus">Pro_1052</name>
</gene>
<protein>
    <recommendedName>
        <fullName evidence="1">Glycogen synthase</fullName>
        <ecNumber evidence="1">2.4.1.21</ecNumber>
    </recommendedName>
    <alternativeName>
        <fullName evidence="1">Starch [bacterial glycogen] synthase</fullName>
    </alternativeName>
</protein>
<keyword id="KW-0320">Glycogen biosynthesis</keyword>
<keyword id="KW-0328">Glycosyltransferase</keyword>
<keyword id="KW-1185">Reference proteome</keyword>
<keyword id="KW-0808">Transferase</keyword>
<accession>Q7VBP0</accession>
<dbReference type="EC" id="2.4.1.21" evidence="1"/>
<dbReference type="EMBL" id="AE017126">
    <property type="protein sequence ID" value="AAQ00097.1"/>
    <property type="molecule type" value="Genomic_DNA"/>
</dbReference>
<dbReference type="RefSeq" id="NP_875444.1">
    <property type="nucleotide sequence ID" value="NC_005042.1"/>
</dbReference>
<dbReference type="RefSeq" id="WP_011125204.1">
    <property type="nucleotide sequence ID" value="NC_005042.1"/>
</dbReference>
<dbReference type="SMR" id="Q7VBP0"/>
<dbReference type="STRING" id="167539.Pro_1052"/>
<dbReference type="CAZy" id="GT5">
    <property type="family name" value="Glycosyltransferase Family 5"/>
</dbReference>
<dbReference type="EnsemblBacteria" id="AAQ00097">
    <property type="protein sequence ID" value="AAQ00097"/>
    <property type="gene ID" value="Pro_1052"/>
</dbReference>
<dbReference type="KEGG" id="pma:Pro_1052"/>
<dbReference type="PATRIC" id="fig|167539.5.peg.1102"/>
<dbReference type="eggNOG" id="COG0297">
    <property type="taxonomic scope" value="Bacteria"/>
</dbReference>
<dbReference type="HOGENOM" id="CLU_009583_18_2_3"/>
<dbReference type="OrthoDB" id="9808590at2"/>
<dbReference type="UniPathway" id="UPA00164"/>
<dbReference type="Proteomes" id="UP000001420">
    <property type="component" value="Chromosome"/>
</dbReference>
<dbReference type="GO" id="GO:0009011">
    <property type="term" value="F:alpha-1,4-glucan glucosyltransferase (ADP-glucose donor) activity"/>
    <property type="evidence" value="ECO:0007669"/>
    <property type="project" value="UniProtKB-UniRule"/>
</dbReference>
<dbReference type="GO" id="GO:0004373">
    <property type="term" value="F:alpha-1,4-glucan glucosyltransferase (UDP-glucose donor) activity"/>
    <property type="evidence" value="ECO:0007669"/>
    <property type="project" value="InterPro"/>
</dbReference>
<dbReference type="GO" id="GO:0005978">
    <property type="term" value="P:glycogen biosynthetic process"/>
    <property type="evidence" value="ECO:0007669"/>
    <property type="project" value="UniProtKB-UniRule"/>
</dbReference>
<dbReference type="CDD" id="cd03791">
    <property type="entry name" value="GT5_Glycogen_synthase_DULL1-like"/>
    <property type="match status" value="1"/>
</dbReference>
<dbReference type="Gene3D" id="3.40.50.2000">
    <property type="entry name" value="Glycogen Phosphorylase B"/>
    <property type="match status" value="2"/>
</dbReference>
<dbReference type="HAMAP" id="MF_00484">
    <property type="entry name" value="Glycogen_synth"/>
    <property type="match status" value="1"/>
</dbReference>
<dbReference type="InterPro" id="IPR001296">
    <property type="entry name" value="Glyco_trans_1"/>
</dbReference>
<dbReference type="InterPro" id="IPR011835">
    <property type="entry name" value="GS/SS"/>
</dbReference>
<dbReference type="InterPro" id="IPR013534">
    <property type="entry name" value="Starch_synth_cat_dom"/>
</dbReference>
<dbReference type="NCBIfam" id="TIGR02095">
    <property type="entry name" value="glgA"/>
    <property type="match status" value="1"/>
</dbReference>
<dbReference type="NCBIfam" id="NF001900">
    <property type="entry name" value="PRK00654.1-3"/>
    <property type="match status" value="1"/>
</dbReference>
<dbReference type="PANTHER" id="PTHR45825:SF11">
    <property type="entry name" value="ALPHA AMYLASE DOMAIN-CONTAINING PROTEIN"/>
    <property type="match status" value="1"/>
</dbReference>
<dbReference type="PANTHER" id="PTHR45825">
    <property type="entry name" value="GRANULE-BOUND STARCH SYNTHASE 1, CHLOROPLASTIC/AMYLOPLASTIC"/>
    <property type="match status" value="1"/>
</dbReference>
<dbReference type="Pfam" id="PF08323">
    <property type="entry name" value="Glyco_transf_5"/>
    <property type="match status" value="1"/>
</dbReference>
<dbReference type="Pfam" id="PF00534">
    <property type="entry name" value="Glycos_transf_1"/>
    <property type="match status" value="1"/>
</dbReference>
<dbReference type="SUPFAM" id="SSF53756">
    <property type="entry name" value="UDP-Glycosyltransferase/glycogen phosphorylase"/>
    <property type="match status" value="1"/>
</dbReference>
<proteinExistence type="inferred from homology"/>
<feature type="chain" id="PRO_0000188629" description="Glycogen synthase">
    <location>
        <begin position="1"/>
        <end position="501"/>
    </location>
</feature>
<feature type="region of interest" description="Disordered" evidence="2">
    <location>
        <begin position="476"/>
        <end position="501"/>
    </location>
</feature>
<feature type="binding site" evidence="1">
    <location>
        <position position="15"/>
    </location>
    <ligand>
        <name>ADP-alpha-D-glucose</name>
        <dbReference type="ChEBI" id="CHEBI:57498"/>
    </ligand>
</feature>
<comment type="function">
    <text evidence="1">Synthesizes alpha-1,4-glucan chains using ADP-glucose.</text>
</comment>
<comment type="catalytic activity">
    <reaction evidence="1">
        <text>[(1-&gt;4)-alpha-D-glucosyl](n) + ADP-alpha-D-glucose = [(1-&gt;4)-alpha-D-glucosyl](n+1) + ADP + H(+)</text>
        <dbReference type="Rhea" id="RHEA:18189"/>
        <dbReference type="Rhea" id="RHEA-COMP:9584"/>
        <dbReference type="Rhea" id="RHEA-COMP:9587"/>
        <dbReference type="ChEBI" id="CHEBI:15378"/>
        <dbReference type="ChEBI" id="CHEBI:15444"/>
        <dbReference type="ChEBI" id="CHEBI:57498"/>
        <dbReference type="ChEBI" id="CHEBI:456216"/>
        <dbReference type="EC" id="2.4.1.21"/>
    </reaction>
</comment>
<comment type="pathway">
    <text evidence="1">Glycan biosynthesis; glycogen biosynthesis.</text>
</comment>
<comment type="similarity">
    <text evidence="1">Belongs to the glycosyltransferase 1 family. Bacterial/plant glycogen synthase subfamily.</text>
</comment>
<sequence>MRVLFAAAECAPMVKVGGMGDVVASLPSALAKLGHDVRLIIPGYSKLWGLLDISKDPIYTAQTMGAEFSVYETKHPTSNLPIYLVGHPVFDPERIYGGEDEDWRFTFFASATAEFAWNVWKPQVLHCHDWHTGMIPVWMHQDPEISTVFTIHNLKYQGPWRWKLERMTWCPWYMSGDHTMAAAMLFADRVNAVSPTYSREIRTSEYGESLEGLLNYISGKLRGILNGIDLDEWDPATDKALPANFSSGKMSTRKKNKEALQRQMGLEVNNDKYLLGMVGRLVDQKGVDLLLQVSRRLLAYTDSQIVVLGTGDQILESALWELAIDHPGRFAVFLTYDDYLSRLIYAGSDAFLMPSRFEPCGISQLLAMRYGSIPIVRNVGGLVDTVIPHDPINKSGTGFCFDRFEPIDFYTALVRSWEAFRHRRSWKELQKRAMTQMYSWERSAMEYETMYKEVSGYKEPSPDAIEVEKFSVGQDADPSLKNEKLSVGQDEDSSLKNERFI</sequence>
<evidence type="ECO:0000255" key="1">
    <source>
        <dbReference type="HAMAP-Rule" id="MF_00484"/>
    </source>
</evidence>
<evidence type="ECO:0000256" key="2">
    <source>
        <dbReference type="SAM" id="MobiDB-lite"/>
    </source>
</evidence>
<reference key="1">
    <citation type="journal article" date="2003" name="Proc. Natl. Acad. Sci. U.S.A.">
        <title>Genome sequence of the cyanobacterium Prochlorococcus marinus SS120, a nearly minimal oxyphototrophic genome.</title>
        <authorList>
            <person name="Dufresne A."/>
            <person name="Salanoubat M."/>
            <person name="Partensky F."/>
            <person name="Artiguenave F."/>
            <person name="Axmann I.M."/>
            <person name="Barbe V."/>
            <person name="Duprat S."/>
            <person name="Galperin M.Y."/>
            <person name="Koonin E.V."/>
            <person name="Le Gall F."/>
            <person name="Makarova K.S."/>
            <person name="Ostrowski M."/>
            <person name="Oztas S."/>
            <person name="Robert C."/>
            <person name="Rogozin I.B."/>
            <person name="Scanlan D.J."/>
            <person name="Tandeau de Marsac N."/>
            <person name="Weissenbach J."/>
            <person name="Wincker P."/>
            <person name="Wolf Y.I."/>
            <person name="Hess W.R."/>
        </authorList>
    </citation>
    <scope>NUCLEOTIDE SEQUENCE [LARGE SCALE GENOMIC DNA]</scope>
    <source>
        <strain>SARG / CCMP1375 / SS120</strain>
    </source>
</reference>